<name>RIMP_FINM2</name>
<feature type="chain" id="PRO_1000136761" description="Ribosome maturation factor RimP">
    <location>
        <begin position="1"/>
        <end position="154"/>
    </location>
</feature>
<reference key="1">
    <citation type="journal article" date="2008" name="DNA Res.">
        <title>Complete genome sequence of Finegoldia magna, an anaerobic opportunistic pathogen.</title>
        <authorList>
            <person name="Goto T."/>
            <person name="Yamashita A."/>
            <person name="Hirakawa H."/>
            <person name="Matsutani M."/>
            <person name="Todo K."/>
            <person name="Ohshima K."/>
            <person name="Toh H."/>
            <person name="Miyamoto K."/>
            <person name="Kuhara S."/>
            <person name="Hattori M."/>
            <person name="Shimizu T."/>
            <person name="Akimoto S."/>
        </authorList>
    </citation>
    <scope>NUCLEOTIDE SEQUENCE [LARGE SCALE GENOMIC DNA]</scope>
    <source>
        <strain>ATCC 29328 / DSM 20472 / WAL 2508</strain>
    </source>
</reference>
<proteinExistence type="inferred from homology"/>
<organism>
    <name type="scientific">Finegoldia magna (strain ATCC 29328 / DSM 20472 / WAL 2508)</name>
    <name type="common">Peptostreptococcus magnus</name>
    <dbReference type="NCBI Taxonomy" id="334413"/>
    <lineage>
        <taxon>Bacteria</taxon>
        <taxon>Bacillati</taxon>
        <taxon>Bacillota</taxon>
        <taxon>Tissierellia</taxon>
        <taxon>Tissierellales</taxon>
        <taxon>Peptoniphilaceae</taxon>
        <taxon>Finegoldia</taxon>
    </lineage>
</organism>
<evidence type="ECO:0000255" key="1">
    <source>
        <dbReference type="HAMAP-Rule" id="MF_01077"/>
    </source>
</evidence>
<gene>
    <name evidence="1" type="primary">rimP</name>
    <name type="ordered locus">FMG_0770</name>
</gene>
<dbReference type="EMBL" id="AP008971">
    <property type="protein sequence ID" value="BAG08188.1"/>
    <property type="molecule type" value="Genomic_DNA"/>
</dbReference>
<dbReference type="RefSeq" id="WP_002839170.1">
    <property type="nucleotide sequence ID" value="NC_010376.1"/>
</dbReference>
<dbReference type="SMR" id="B0S1E8"/>
<dbReference type="STRING" id="334413.FMG_0770"/>
<dbReference type="KEGG" id="fma:FMG_0770"/>
<dbReference type="eggNOG" id="COG0779">
    <property type="taxonomic scope" value="Bacteria"/>
</dbReference>
<dbReference type="HOGENOM" id="CLU_070525_2_2_9"/>
<dbReference type="Proteomes" id="UP000001319">
    <property type="component" value="Chromosome"/>
</dbReference>
<dbReference type="GO" id="GO:0005829">
    <property type="term" value="C:cytosol"/>
    <property type="evidence" value="ECO:0007669"/>
    <property type="project" value="TreeGrafter"/>
</dbReference>
<dbReference type="GO" id="GO:0000028">
    <property type="term" value="P:ribosomal small subunit assembly"/>
    <property type="evidence" value="ECO:0007669"/>
    <property type="project" value="TreeGrafter"/>
</dbReference>
<dbReference type="GO" id="GO:0006412">
    <property type="term" value="P:translation"/>
    <property type="evidence" value="ECO:0007669"/>
    <property type="project" value="TreeGrafter"/>
</dbReference>
<dbReference type="CDD" id="cd01734">
    <property type="entry name" value="YlxS_C"/>
    <property type="match status" value="1"/>
</dbReference>
<dbReference type="Gene3D" id="2.30.30.180">
    <property type="entry name" value="Ribosome maturation factor RimP, C-terminal domain"/>
    <property type="match status" value="1"/>
</dbReference>
<dbReference type="Gene3D" id="3.30.300.70">
    <property type="entry name" value="RimP-like superfamily, N-terminal"/>
    <property type="match status" value="1"/>
</dbReference>
<dbReference type="HAMAP" id="MF_01077">
    <property type="entry name" value="RimP"/>
    <property type="match status" value="1"/>
</dbReference>
<dbReference type="InterPro" id="IPR003728">
    <property type="entry name" value="Ribosome_maturation_RimP"/>
</dbReference>
<dbReference type="InterPro" id="IPR028998">
    <property type="entry name" value="RimP_C"/>
</dbReference>
<dbReference type="InterPro" id="IPR036847">
    <property type="entry name" value="RimP_C_sf"/>
</dbReference>
<dbReference type="InterPro" id="IPR028989">
    <property type="entry name" value="RimP_N"/>
</dbReference>
<dbReference type="InterPro" id="IPR035956">
    <property type="entry name" value="RimP_N_sf"/>
</dbReference>
<dbReference type="PANTHER" id="PTHR33867">
    <property type="entry name" value="RIBOSOME MATURATION FACTOR RIMP"/>
    <property type="match status" value="1"/>
</dbReference>
<dbReference type="PANTHER" id="PTHR33867:SF1">
    <property type="entry name" value="RIBOSOME MATURATION FACTOR RIMP"/>
    <property type="match status" value="1"/>
</dbReference>
<dbReference type="Pfam" id="PF17384">
    <property type="entry name" value="DUF150_C"/>
    <property type="match status" value="1"/>
</dbReference>
<dbReference type="Pfam" id="PF02576">
    <property type="entry name" value="RimP_N"/>
    <property type="match status" value="1"/>
</dbReference>
<dbReference type="SUPFAM" id="SSF74942">
    <property type="entry name" value="YhbC-like, C-terminal domain"/>
    <property type="match status" value="1"/>
</dbReference>
<dbReference type="SUPFAM" id="SSF75420">
    <property type="entry name" value="YhbC-like, N-terminal domain"/>
    <property type="match status" value="1"/>
</dbReference>
<accession>B0S1E8</accession>
<protein>
    <recommendedName>
        <fullName evidence="1">Ribosome maturation factor RimP</fullName>
    </recommendedName>
</protein>
<sequence>MNKKYLRDLMNNDLSPLIKDTGIEFYDVEYSNNNGKNILTFYIEKDDGLISIDDCELINNKISDKLDEIDPISDPYYLEIASVDITTPFTRDKDFKKNLGNVVIVNLYQKLDSKKEFKGILTDFNDTEISLELEKKEIKIERSNISSIKLSLFD</sequence>
<comment type="function">
    <text evidence="1">Required for maturation of 30S ribosomal subunits.</text>
</comment>
<comment type="subcellular location">
    <subcellularLocation>
        <location evidence="1">Cytoplasm</location>
    </subcellularLocation>
</comment>
<comment type="similarity">
    <text evidence="1">Belongs to the RimP family.</text>
</comment>
<keyword id="KW-0963">Cytoplasm</keyword>
<keyword id="KW-1185">Reference proteome</keyword>
<keyword id="KW-0690">Ribosome biogenesis</keyword>